<reference key="1">
    <citation type="journal article" date="1992" name="Gene">
        <title>Cloning and sequencing of Pseudomonas genes determining sodium dodecyl sulfate biodegradation.</title>
        <authorList>
            <person name="Davison J."/>
            <person name="Brunel F."/>
            <person name="Phanopoulos A."/>
            <person name="Prozzi D."/>
            <person name="Terpstra P."/>
        </authorList>
    </citation>
    <scope>NUCLEOTIDE SEQUENCE [GENOMIC DNA]</scope>
</reference>
<evidence type="ECO:0000255" key="1">
    <source>
        <dbReference type="PROSITE-ProRule" id="PRU00253"/>
    </source>
</evidence>
<evidence type="ECO:0000305" key="2"/>
<keyword id="KW-0010">Activator</keyword>
<keyword id="KW-0238">DNA-binding</keyword>
<keyword id="KW-0804">Transcription</keyword>
<keyword id="KW-0805">Transcription regulation</keyword>
<organism>
    <name type="scientific">Pseudomonas sp. (strain ATCC 19151)</name>
    <dbReference type="NCBI Taxonomy" id="315"/>
    <lineage>
        <taxon>Bacteria</taxon>
        <taxon>Pseudomonadati</taxon>
        <taxon>Pseudomonadota</taxon>
    </lineage>
</organism>
<proteinExistence type="inferred from homology"/>
<protein>
    <recommendedName>
        <fullName>SDS degradation transcriptional activation protein</fullName>
    </recommendedName>
</protein>
<feature type="chain" id="PRO_0000105749" description="SDS degradation transcriptional activation protein">
    <location>
        <begin position="1"/>
        <end position="306"/>
    </location>
</feature>
<feature type="domain" description="HTH lysR-type" evidence="1">
    <location>
        <begin position="1"/>
        <end position="59"/>
    </location>
</feature>
<feature type="DNA-binding region" description="H-T-H motif" evidence="1">
    <location>
        <begin position="19"/>
        <end position="38"/>
    </location>
</feature>
<name>SDSB_PSES9</name>
<dbReference type="EMBL" id="M86744">
    <property type="protein sequence ID" value="AAA25988.1"/>
    <property type="molecule type" value="Genomic_DNA"/>
</dbReference>
<dbReference type="SMR" id="P52686"/>
<dbReference type="GO" id="GO:0005829">
    <property type="term" value="C:cytosol"/>
    <property type="evidence" value="ECO:0007669"/>
    <property type="project" value="TreeGrafter"/>
</dbReference>
<dbReference type="GO" id="GO:0003677">
    <property type="term" value="F:DNA binding"/>
    <property type="evidence" value="ECO:0007669"/>
    <property type="project" value="UniProtKB-KW"/>
</dbReference>
<dbReference type="GO" id="GO:0003700">
    <property type="term" value="F:DNA-binding transcription factor activity"/>
    <property type="evidence" value="ECO:0007669"/>
    <property type="project" value="InterPro"/>
</dbReference>
<dbReference type="FunFam" id="1.10.10.10:FF:000001">
    <property type="entry name" value="LysR family transcriptional regulator"/>
    <property type="match status" value="1"/>
</dbReference>
<dbReference type="Gene3D" id="3.40.190.290">
    <property type="match status" value="1"/>
</dbReference>
<dbReference type="Gene3D" id="1.10.10.10">
    <property type="entry name" value="Winged helix-like DNA-binding domain superfamily/Winged helix DNA-binding domain"/>
    <property type="match status" value="1"/>
</dbReference>
<dbReference type="InterPro" id="IPR050950">
    <property type="entry name" value="HTH-type_LysR_regulators"/>
</dbReference>
<dbReference type="InterPro" id="IPR005119">
    <property type="entry name" value="LysR_subst-bd"/>
</dbReference>
<dbReference type="InterPro" id="IPR000847">
    <property type="entry name" value="Tscrpt_reg_HTH_LysR"/>
</dbReference>
<dbReference type="InterPro" id="IPR036388">
    <property type="entry name" value="WH-like_DNA-bd_sf"/>
</dbReference>
<dbReference type="InterPro" id="IPR036390">
    <property type="entry name" value="WH_DNA-bd_sf"/>
</dbReference>
<dbReference type="PANTHER" id="PTHR30419">
    <property type="entry name" value="HTH-TYPE TRANSCRIPTIONAL REGULATOR YBHD"/>
    <property type="match status" value="1"/>
</dbReference>
<dbReference type="PANTHER" id="PTHR30419:SF30">
    <property type="entry name" value="LYSR FAMILY TRANSCRIPTIONAL REGULATOR"/>
    <property type="match status" value="1"/>
</dbReference>
<dbReference type="Pfam" id="PF00126">
    <property type="entry name" value="HTH_1"/>
    <property type="match status" value="1"/>
</dbReference>
<dbReference type="Pfam" id="PF03466">
    <property type="entry name" value="LysR_substrate"/>
    <property type="match status" value="1"/>
</dbReference>
<dbReference type="PRINTS" id="PR00039">
    <property type="entry name" value="HTHLYSR"/>
</dbReference>
<dbReference type="SUPFAM" id="SSF53850">
    <property type="entry name" value="Periplasmic binding protein-like II"/>
    <property type="match status" value="1"/>
</dbReference>
<dbReference type="SUPFAM" id="SSF46785">
    <property type="entry name" value="Winged helix' DNA-binding domain"/>
    <property type="match status" value="1"/>
</dbReference>
<dbReference type="PROSITE" id="PS50931">
    <property type="entry name" value="HTH_LYSR"/>
    <property type="match status" value="1"/>
</dbReference>
<sequence length="306" mass="32956">MNDLRQLRHFVALAEHGHFARAAEAVNLSQPALSRSIQALENGLGCRLLDRGPRQVSLTAHGRLVLEHARRLLDGDRALRSAVSQLDNLGSGELRLGAGPYPGARLVPRALGRFAGAHPGVRVQLAIDTWYSLHQRLLDDALELFVADVRELRDDPQLEVTPLRSWPGVIFCRPGHPLLGRRRHRLTAADLAAYPLAGTQVPAEVAQALGQLAESGQPLGIECDNFMALKALVAESDVLSMAPLDVVAEEIEAGRLALLELAPGLLSQRSAYGLVSRAGRTLSPAAEAMRGLILDEDARTPPASAR</sequence>
<accession>P52686</accession>
<gene>
    <name type="primary">sdsB</name>
</gene>
<comment type="function">
    <text>Activates the transcription of the sdsA gene for sodium dodecyl sulfate (SDS) degradation.</text>
</comment>
<comment type="similarity">
    <text evidence="2">Belongs to the LysR transcriptional regulatory family.</text>
</comment>